<gene>
    <name type="primary">MT-CYB</name>
    <name type="synonym">COB</name>
    <name type="synonym">CYTB</name>
    <name type="synonym">MTCYB</name>
</gene>
<keyword id="KW-0249">Electron transport</keyword>
<keyword id="KW-0349">Heme</keyword>
<keyword id="KW-0408">Iron</keyword>
<keyword id="KW-0472">Membrane</keyword>
<keyword id="KW-0479">Metal-binding</keyword>
<keyword id="KW-0496">Mitochondrion</keyword>
<keyword id="KW-0999">Mitochondrion inner membrane</keyword>
<keyword id="KW-0679">Respiratory chain</keyword>
<keyword id="KW-0812">Transmembrane</keyword>
<keyword id="KW-1133">Transmembrane helix</keyword>
<keyword id="KW-0813">Transport</keyword>
<keyword id="KW-0830">Ubiquinone</keyword>
<proteinExistence type="inferred from homology"/>
<dbReference type="EMBL" id="AJ245723">
    <property type="protein sequence ID" value="CAC17754.1"/>
    <property type="molecule type" value="Genomic_DNA"/>
</dbReference>
<dbReference type="SMR" id="Q9G396"/>
<dbReference type="GO" id="GO:0005743">
    <property type="term" value="C:mitochondrial inner membrane"/>
    <property type="evidence" value="ECO:0007669"/>
    <property type="project" value="UniProtKB-SubCell"/>
</dbReference>
<dbReference type="GO" id="GO:0045275">
    <property type="term" value="C:respiratory chain complex III"/>
    <property type="evidence" value="ECO:0007669"/>
    <property type="project" value="InterPro"/>
</dbReference>
<dbReference type="GO" id="GO:0046872">
    <property type="term" value="F:metal ion binding"/>
    <property type="evidence" value="ECO:0007669"/>
    <property type="project" value="UniProtKB-KW"/>
</dbReference>
<dbReference type="GO" id="GO:0008121">
    <property type="term" value="F:ubiquinol-cytochrome-c reductase activity"/>
    <property type="evidence" value="ECO:0007669"/>
    <property type="project" value="InterPro"/>
</dbReference>
<dbReference type="GO" id="GO:0006122">
    <property type="term" value="P:mitochondrial electron transport, ubiquinol to cytochrome c"/>
    <property type="evidence" value="ECO:0007669"/>
    <property type="project" value="TreeGrafter"/>
</dbReference>
<dbReference type="CDD" id="cd00290">
    <property type="entry name" value="cytochrome_b_C"/>
    <property type="match status" value="1"/>
</dbReference>
<dbReference type="CDD" id="cd00284">
    <property type="entry name" value="Cytochrome_b_N"/>
    <property type="match status" value="1"/>
</dbReference>
<dbReference type="FunFam" id="1.20.810.10:FF:000002">
    <property type="entry name" value="Cytochrome b"/>
    <property type="match status" value="1"/>
</dbReference>
<dbReference type="Gene3D" id="1.20.810.10">
    <property type="entry name" value="Cytochrome Bc1 Complex, Chain C"/>
    <property type="match status" value="1"/>
</dbReference>
<dbReference type="InterPro" id="IPR005798">
    <property type="entry name" value="Cyt_b/b6_C"/>
</dbReference>
<dbReference type="InterPro" id="IPR036150">
    <property type="entry name" value="Cyt_b/b6_C_sf"/>
</dbReference>
<dbReference type="InterPro" id="IPR005797">
    <property type="entry name" value="Cyt_b/b6_N"/>
</dbReference>
<dbReference type="InterPro" id="IPR027387">
    <property type="entry name" value="Cytb/b6-like_sf"/>
</dbReference>
<dbReference type="InterPro" id="IPR030689">
    <property type="entry name" value="Cytochrome_b"/>
</dbReference>
<dbReference type="InterPro" id="IPR048260">
    <property type="entry name" value="Cytochrome_b_C_euk/bac"/>
</dbReference>
<dbReference type="InterPro" id="IPR048259">
    <property type="entry name" value="Cytochrome_b_N_euk/bac"/>
</dbReference>
<dbReference type="InterPro" id="IPR016174">
    <property type="entry name" value="Di-haem_cyt_TM"/>
</dbReference>
<dbReference type="PANTHER" id="PTHR19271">
    <property type="entry name" value="CYTOCHROME B"/>
    <property type="match status" value="1"/>
</dbReference>
<dbReference type="PANTHER" id="PTHR19271:SF16">
    <property type="entry name" value="CYTOCHROME B"/>
    <property type="match status" value="1"/>
</dbReference>
<dbReference type="Pfam" id="PF00032">
    <property type="entry name" value="Cytochrom_B_C"/>
    <property type="match status" value="1"/>
</dbReference>
<dbReference type="Pfam" id="PF00033">
    <property type="entry name" value="Cytochrome_B"/>
    <property type="match status" value="1"/>
</dbReference>
<dbReference type="PIRSF" id="PIRSF038885">
    <property type="entry name" value="COB"/>
    <property type="match status" value="1"/>
</dbReference>
<dbReference type="SUPFAM" id="SSF81648">
    <property type="entry name" value="a domain/subunit of cytochrome bc1 complex (Ubiquinol-cytochrome c reductase)"/>
    <property type="match status" value="1"/>
</dbReference>
<dbReference type="SUPFAM" id="SSF81342">
    <property type="entry name" value="Transmembrane di-heme cytochromes"/>
    <property type="match status" value="1"/>
</dbReference>
<dbReference type="PROSITE" id="PS51003">
    <property type="entry name" value="CYTB_CTER"/>
    <property type="match status" value="1"/>
</dbReference>
<dbReference type="PROSITE" id="PS51002">
    <property type="entry name" value="CYTB_NTER"/>
    <property type="match status" value="1"/>
</dbReference>
<name>CYB_DICSU</name>
<geneLocation type="mitochondrion"/>
<protein>
    <recommendedName>
        <fullName>Cytochrome b</fullName>
    </recommendedName>
    <alternativeName>
        <fullName>Complex III subunit 3</fullName>
    </alternativeName>
    <alternativeName>
        <fullName>Complex III subunit III</fullName>
    </alternativeName>
    <alternativeName>
        <fullName>Cytochrome b-c1 complex subunit 3</fullName>
    </alternativeName>
    <alternativeName>
        <fullName>Ubiquinol-cytochrome-c reductase complex cytochrome b subunit</fullName>
    </alternativeName>
</protein>
<reference key="1">
    <citation type="journal article" date="2001" name="Mol. Phylogenet. Evol.">
        <title>Phylogenetic relationships of the five extant rhinoceros species (Rhinocerotidae, Perissodactyla) based on mitochondrial cytochrome b and 12S rRNA genes.</title>
        <authorList>
            <person name="Tougard C."/>
            <person name="Delefosse T."/>
            <person name="Hanni C."/>
            <person name="Montgelard C."/>
        </authorList>
    </citation>
    <scope>NUCLEOTIDE SEQUENCE [GENOMIC DNA]</scope>
</reference>
<feature type="chain" id="PRO_0000254796" description="Cytochrome b">
    <location>
        <begin position="1"/>
        <end position="379"/>
    </location>
</feature>
<feature type="transmembrane region" description="Helical" evidence="2">
    <location>
        <begin position="33"/>
        <end position="53"/>
    </location>
</feature>
<feature type="transmembrane region" description="Helical" evidence="2">
    <location>
        <begin position="77"/>
        <end position="98"/>
    </location>
</feature>
<feature type="transmembrane region" description="Helical" evidence="2">
    <location>
        <begin position="113"/>
        <end position="133"/>
    </location>
</feature>
<feature type="transmembrane region" description="Helical" evidence="2">
    <location>
        <begin position="178"/>
        <end position="198"/>
    </location>
</feature>
<feature type="transmembrane region" description="Helical" evidence="2">
    <location>
        <begin position="226"/>
        <end position="246"/>
    </location>
</feature>
<feature type="transmembrane region" description="Helical" evidence="2">
    <location>
        <begin position="288"/>
        <end position="308"/>
    </location>
</feature>
<feature type="transmembrane region" description="Helical" evidence="2">
    <location>
        <begin position="320"/>
        <end position="340"/>
    </location>
</feature>
<feature type="transmembrane region" description="Helical" evidence="2">
    <location>
        <begin position="347"/>
        <end position="367"/>
    </location>
</feature>
<feature type="binding site" description="axial binding residue" evidence="2">
    <location>
        <position position="83"/>
    </location>
    <ligand>
        <name>heme b</name>
        <dbReference type="ChEBI" id="CHEBI:60344"/>
        <label>b562</label>
    </ligand>
    <ligandPart>
        <name>Fe</name>
        <dbReference type="ChEBI" id="CHEBI:18248"/>
    </ligandPart>
</feature>
<feature type="binding site" description="axial binding residue" evidence="2">
    <location>
        <position position="97"/>
    </location>
    <ligand>
        <name>heme b</name>
        <dbReference type="ChEBI" id="CHEBI:60344"/>
        <label>b566</label>
    </ligand>
    <ligandPart>
        <name>Fe</name>
        <dbReference type="ChEBI" id="CHEBI:18248"/>
    </ligandPart>
</feature>
<feature type="binding site" description="axial binding residue" evidence="2">
    <location>
        <position position="182"/>
    </location>
    <ligand>
        <name>heme b</name>
        <dbReference type="ChEBI" id="CHEBI:60344"/>
        <label>b562</label>
    </ligand>
    <ligandPart>
        <name>Fe</name>
        <dbReference type="ChEBI" id="CHEBI:18248"/>
    </ligandPart>
</feature>
<feature type="binding site" description="axial binding residue" evidence="2">
    <location>
        <position position="196"/>
    </location>
    <ligand>
        <name>heme b</name>
        <dbReference type="ChEBI" id="CHEBI:60344"/>
        <label>b566</label>
    </ligand>
    <ligandPart>
        <name>Fe</name>
        <dbReference type="ChEBI" id="CHEBI:18248"/>
    </ligandPart>
</feature>
<feature type="binding site" evidence="2">
    <location>
        <position position="201"/>
    </location>
    <ligand>
        <name>a ubiquinone</name>
        <dbReference type="ChEBI" id="CHEBI:16389"/>
    </ligand>
</feature>
<sequence>MTNIRKSHPLIKIINHSFIDLPTPSNISSWWNFGSLLGICLILQILTGLFLAMHYTPDTTTAFSSVAHICRDVNYGWIIRYTHANGASMFFICLFIHVGRGLYYGSYTFLETWNIGTIFLLTLMATAFMGYVLPWGQMSFWGATVITNLLSAIPYIGTDLVEWIWGGFSVDKATLTRFFAFHFILPFIILALAITHLLFLHETGSNNPSGIPSNMDKIPFHPYYTIKDILGALLLILALLTLVLFSPDLLGDPDNYTPANPLSTPPHIKPEWYFLFAYAILRSIPNKLGGVLALAFSILILLIVPSLHTSKQRSMMFRPLSQCVFWLLVADLLTLTWIGGQPVEHPFIIIGQLASILYFSLILVLMPLAGIIENNLLKW</sequence>
<evidence type="ECO:0000250" key="1"/>
<evidence type="ECO:0000250" key="2">
    <source>
        <dbReference type="UniProtKB" id="P00157"/>
    </source>
</evidence>
<evidence type="ECO:0000255" key="3">
    <source>
        <dbReference type="PROSITE-ProRule" id="PRU00967"/>
    </source>
</evidence>
<evidence type="ECO:0000255" key="4">
    <source>
        <dbReference type="PROSITE-ProRule" id="PRU00968"/>
    </source>
</evidence>
<organism>
    <name type="scientific">Dicerorhinus sumatrensis</name>
    <name type="common">Sumatran rhinoceros</name>
    <dbReference type="NCBI Taxonomy" id="89632"/>
    <lineage>
        <taxon>Eukaryota</taxon>
        <taxon>Metazoa</taxon>
        <taxon>Chordata</taxon>
        <taxon>Craniata</taxon>
        <taxon>Vertebrata</taxon>
        <taxon>Euteleostomi</taxon>
        <taxon>Mammalia</taxon>
        <taxon>Eutheria</taxon>
        <taxon>Laurasiatheria</taxon>
        <taxon>Perissodactyla</taxon>
        <taxon>Rhinocerotidae</taxon>
        <taxon>Dicerorhinus</taxon>
    </lineage>
</organism>
<comment type="function">
    <text evidence="2">Component of the ubiquinol-cytochrome c reductase complex (complex III or cytochrome b-c1 complex) that is part of the mitochondrial respiratory chain. The b-c1 complex mediates electron transfer from ubiquinol to cytochrome c. Contributes to the generation of a proton gradient across the mitochondrial membrane that is then used for ATP synthesis.</text>
</comment>
<comment type="cofactor">
    <cofactor evidence="2">
        <name>heme b</name>
        <dbReference type="ChEBI" id="CHEBI:60344"/>
    </cofactor>
    <text evidence="2">Binds 2 heme b groups non-covalently.</text>
</comment>
<comment type="subunit">
    <text evidence="2">The cytochrome bc1 complex contains 11 subunits: 3 respiratory subunits (MT-CYB, CYC1 and UQCRFS1), 2 core proteins (UQCRC1 and UQCRC2) and 6 low-molecular weight proteins (UQCRH/QCR6, UQCRB/QCR7, UQCRQ/QCR8, UQCR10/QCR9, UQCR11/QCR10 and a cleavage product of UQCRFS1). This cytochrome bc1 complex then forms a dimer.</text>
</comment>
<comment type="subcellular location">
    <subcellularLocation>
        <location evidence="2">Mitochondrion inner membrane</location>
        <topology evidence="2">Multi-pass membrane protein</topology>
    </subcellularLocation>
</comment>
<comment type="miscellaneous">
    <text evidence="1">Heme 1 (or BL or b562) is low-potential and absorbs at about 562 nm, and heme 2 (or BH or b566) is high-potential and absorbs at about 566 nm.</text>
</comment>
<comment type="similarity">
    <text evidence="3 4">Belongs to the cytochrome b family.</text>
</comment>
<comment type="caution">
    <text evidence="2">The full-length protein contains only eight transmembrane helices, not nine as predicted by bioinformatics tools.</text>
</comment>
<accession>Q9G396</accession>